<feature type="chain" id="PRO_0000296966" description="Ribosomal RNA small subunit methyltransferase J">
    <location>
        <begin position="1"/>
        <end position="250"/>
    </location>
</feature>
<feature type="binding site" evidence="1">
    <location>
        <begin position="96"/>
        <end position="97"/>
    </location>
    <ligand>
        <name>S-adenosyl-L-methionine</name>
        <dbReference type="ChEBI" id="CHEBI:59789"/>
    </ligand>
</feature>
<feature type="binding site" evidence="1">
    <location>
        <position position="168"/>
    </location>
    <ligand>
        <name>S-adenosyl-L-methionine</name>
        <dbReference type="ChEBI" id="CHEBI:59789"/>
    </ligand>
</feature>
<evidence type="ECO:0000255" key="1">
    <source>
        <dbReference type="HAMAP-Rule" id="MF_01523"/>
    </source>
</evidence>
<accession>A1KV29</accession>
<organism>
    <name type="scientific">Neisseria meningitidis serogroup C / serotype 2a (strain ATCC 700532 / DSM 15464 / FAM18)</name>
    <dbReference type="NCBI Taxonomy" id="272831"/>
    <lineage>
        <taxon>Bacteria</taxon>
        <taxon>Pseudomonadati</taxon>
        <taxon>Pseudomonadota</taxon>
        <taxon>Betaproteobacteria</taxon>
        <taxon>Neisseriales</taxon>
        <taxon>Neisseriaceae</taxon>
        <taxon>Neisseria</taxon>
    </lineage>
</organism>
<protein>
    <recommendedName>
        <fullName evidence="1">Ribosomal RNA small subunit methyltransferase J</fullName>
        <ecNumber evidence="1">2.1.1.242</ecNumber>
    </recommendedName>
    <alternativeName>
        <fullName evidence="1">16S rRNA m2G1516 methyltransferase</fullName>
    </alternativeName>
    <alternativeName>
        <fullName evidence="1">rRNA (guanine-N(2)-)-methyltransferase</fullName>
    </alternativeName>
</protein>
<comment type="function">
    <text evidence="1">Specifically methylates the guanosine in position 1516 of 16S rRNA.</text>
</comment>
<comment type="catalytic activity">
    <reaction evidence="1">
        <text>guanosine(1516) in 16S rRNA + S-adenosyl-L-methionine = N(2)-methylguanosine(1516) in 16S rRNA + S-adenosyl-L-homocysteine + H(+)</text>
        <dbReference type="Rhea" id="RHEA:43220"/>
        <dbReference type="Rhea" id="RHEA-COMP:10412"/>
        <dbReference type="Rhea" id="RHEA-COMP:10413"/>
        <dbReference type="ChEBI" id="CHEBI:15378"/>
        <dbReference type="ChEBI" id="CHEBI:57856"/>
        <dbReference type="ChEBI" id="CHEBI:59789"/>
        <dbReference type="ChEBI" id="CHEBI:74269"/>
        <dbReference type="ChEBI" id="CHEBI:74481"/>
        <dbReference type="EC" id="2.1.1.242"/>
    </reaction>
</comment>
<comment type="subcellular location">
    <subcellularLocation>
        <location evidence="1">Cytoplasm</location>
    </subcellularLocation>
</comment>
<comment type="similarity">
    <text evidence="1">Belongs to the methyltransferase superfamily. RsmJ family.</text>
</comment>
<name>RSMJ_NEIMF</name>
<reference key="1">
    <citation type="journal article" date="2007" name="PLoS Genet.">
        <title>Meningococcal genetic variation mechanisms viewed through comparative analysis of serogroup C strain FAM18.</title>
        <authorList>
            <person name="Bentley S.D."/>
            <person name="Vernikos G.S."/>
            <person name="Snyder L.A.S."/>
            <person name="Churcher C."/>
            <person name="Arrowsmith C."/>
            <person name="Chillingworth T."/>
            <person name="Cronin A."/>
            <person name="Davis P.H."/>
            <person name="Holroyd N.E."/>
            <person name="Jagels K."/>
            <person name="Maddison M."/>
            <person name="Moule S."/>
            <person name="Rabbinowitsch E."/>
            <person name="Sharp S."/>
            <person name="Unwin L."/>
            <person name="Whitehead S."/>
            <person name="Quail M.A."/>
            <person name="Achtman M."/>
            <person name="Barrell B.G."/>
            <person name="Saunders N.J."/>
            <person name="Parkhill J."/>
        </authorList>
    </citation>
    <scope>NUCLEOTIDE SEQUENCE [LARGE SCALE GENOMIC DNA]</scope>
    <source>
        <strain>ATCC 700532 / DSM 15464 / FAM18</strain>
    </source>
</reference>
<gene>
    <name evidence="1" type="primary">rsmJ</name>
    <name type="ordered locus">NMC1528</name>
</gene>
<proteinExistence type="inferred from homology"/>
<keyword id="KW-0963">Cytoplasm</keyword>
<keyword id="KW-0489">Methyltransferase</keyword>
<keyword id="KW-0698">rRNA processing</keyword>
<keyword id="KW-0949">S-adenosyl-L-methionine</keyword>
<keyword id="KW-0808">Transferase</keyword>
<sequence>MTDILIDNTATEAVRALIQAFSLVPVSQPPEQGSYLLAEHDTVSLRLVGEKSSVIVDFASGAAQYRRTKGGGELIAKAVNHTAHPTVWDATAGLGRDSFVLASLGLAVTAFEQHPAVACLLSDGIRRALLNPETQDTAARITLHFGNAAVQMPALVQTQGKPDIVYLDPMYPERRKSAAVKKEMTYFHRLVGEAQDEAALLHTARQTAKKRVVVKRPRLGEHLAGQAPAYQYTGKSTRFDVYLPYGTDKG</sequence>
<dbReference type="EC" id="2.1.1.242" evidence="1"/>
<dbReference type="EMBL" id="AM421808">
    <property type="protein sequence ID" value="CAM10729.1"/>
    <property type="molecule type" value="Genomic_DNA"/>
</dbReference>
<dbReference type="RefSeq" id="WP_002220515.1">
    <property type="nucleotide sequence ID" value="NC_008767.1"/>
</dbReference>
<dbReference type="SMR" id="A1KV29"/>
<dbReference type="KEGG" id="nmc:NMC1528"/>
<dbReference type="HOGENOM" id="CLU_076324_1_0_4"/>
<dbReference type="Proteomes" id="UP000002286">
    <property type="component" value="Chromosome"/>
</dbReference>
<dbReference type="GO" id="GO:0005737">
    <property type="term" value="C:cytoplasm"/>
    <property type="evidence" value="ECO:0007669"/>
    <property type="project" value="UniProtKB-SubCell"/>
</dbReference>
<dbReference type="GO" id="GO:0008990">
    <property type="term" value="F:rRNA (guanine-N2-)-methyltransferase activity"/>
    <property type="evidence" value="ECO:0007669"/>
    <property type="project" value="UniProtKB-UniRule"/>
</dbReference>
<dbReference type="Gene3D" id="3.40.50.150">
    <property type="entry name" value="Vaccinia Virus protein VP39"/>
    <property type="match status" value="1"/>
</dbReference>
<dbReference type="Gene3D" id="3.40.1630.10">
    <property type="entry name" value="YhiQ-like domain"/>
    <property type="match status" value="1"/>
</dbReference>
<dbReference type="HAMAP" id="MF_01523">
    <property type="entry name" value="16SrRNA_methyltr_J"/>
    <property type="match status" value="1"/>
</dbReference>
<dbReference type="InterPro" id="IPR007536">
    <property type="entry name" value="16SrRNA_methylTrfase_J"/>
</dbReference>
<dbReference type="InterPro" id="IPR029063">
    <property type="entry name" value="SAM-dependent_MTases_sf"/>
</dbReference>
<dbReference type="PANTHER" id="PTHR36112">
    <property type="entry name" value="RIBOSOMAL RNA SMALL SUBUNIT METHYLTRANSFERASE J"/>
    <property type="match status" value="1"/>
</dbReference>
<dbReference type="PANTHER" id="PTHR36112:SF1">
    <property type="entry name" value="RIBOSOMAL RNA SMALL SUBUNIT METHYLTRANSFERASE J"/>
    <property type="match status" value="1"/>
</dbReference>
<dbReference type="Pfam" id="PF04445">
    <property type="entry name" value="SAM_MT"/>
    <property type="match status" value="1"/>
</dbReference>
<dbReference type="SUPFAM" id="SSF53335">
    <property type="entry name" value="S-adenosyl-L-methionine-dependent methyltransferases"/>
    <property type="match status" value="1"/>
</dbReference>